<accession>P87394</accession>
<proteinExistence type="evidence at transcript level"/>
<evidence type="ECO:0000250" key="1">
    <source>
        <dbReference type="UniProtKB" id="B2GRG6"/>
    </source>
</evidence>
<evidence type="ECO:0000250" key="2">
    <source>
        <dbReference type="UniProtKB" id="Q92988"/>
    </source>
</evidence>
<evidence type="ECO:0000255" key="3">
    <source>
        <dbReference type="PROSITE-ProRule" id="PRU00108"/>
    </source>
</evidence>
<evidence type="ECO:0000256" key="4">
    <source>
        <dbReference type="SAM" id="MobiDB-lite"/>
    </source>
</evidence>
<evidence type="ECO:0000305" key="5"/>
<name>DLX4_ELECQ</name>
<gene>
    <name type="primary">DLX4</name>
</gene>
<sequence>GLPHSASYGKALNAYQYQYHGMSGSAGSYAAKAYSEYSYGSPYHPHHQYSGAYNRVQPPSTQPEKEVAEPEVRMVNGKPKKIRKPRTIYSSFQVAALQRRFQKTQYLALPERAELAASLGLTQTQVKIWFQ</sequence>
<reference key="1">
    <citation type="journal article" date="1996" name="Dev. Biol.">
        <title>Patterns of distal-less gene expression and inductive interactions in the head of the direct developing frog Eleutherodactylus coqui.</title>
        <authorList>
            <person name="Fang H."/>
            <person name="Elinson R.P."/>
        </authorList>
    </citation>
    <scope>NUCLEOTIDE SEQUENCE [MRNA]</scope>
</reference>
<dbReference type="EMBL" id="S83212">
    <property type="protein sequence ID" value="AAD14432.1"/>
    <property type="molecule type" value="mRNA"/>
</dbReference>
<dbReference type="SMR" id="P87394"/>
<dbReference type="GO" id="GO:0005634">
    <property type="term" value="C:nucleus"/>
    <property type="evidence" value="ECO:0007669"/>
    <property type="project" value="UniProtKB-SubCell"/>
</dbReference>
<dbReference type="GO" id="GO:0000981">
    <property type="term" value="F:DNA-binding transcription factor activity, RNA polymerase II-specific"/>
    <property type="evidence" value="ECO:0007669"/>
    <property type="project" value="TreeGrafter"/>
</dbReference>
<dbReference type="GO" id="GO:0000978">
    <property type="term" value="F:RNA polymerase II cis-regulatory region sequence-specific DNA binding"/>
    <property type="evidence" value="ECO:0007669"/>
    <property type="project" value="TreeGrafter"/>
</dbReference>
<dbReference type="GO" id="GO:0030154">
    <property type="term" value="P:cell differentiation"/>
    <property type="evidence" value="ECO:0007669"/>
    <property type="project" value="TreeGrafter"/>
</dbReference>
<dbReference type="CDD" id="cd00086">
    <property type="entry name" value="homeodomain"/>
    <property type="match status" value="1"/>
</dbReference>
<dbReference type="Gene3D" id="1.10.10.60">
    <property type="entry name" value="Homeodomain-like"/>
    <property type="match status" value="1"/>
</dbReference>
<dbReference type="InterPro" id="IPR050460">
    <property type="entry name" value="Distal-less_Homeobox_TF"/>
</dbReference>
<dbReference type="InterPro" id="IPR022135">
    <property type="entry name" value="Distal-less_N"/>
</dbReference>
<dbReference type="InterPro" id="IPR001356">
    <property type="entry name" value="HD"/>
</dbReference>
<dbReference type="InterPro" id="IPR009057">
    <property type="entry name" value="Homeodomain-like_sf"/>
</dbReference>
<dbReference type="InterPro" id="IPR000047">
    <property type="entry name" value="HTH_motif"/>
</dbReference>
<dbReference type="PANTHER" id="PTHR24327">
    <property type="entry name" value="HOMEOBOX PROTEIN"/>
    <property type="match status" value="1"/>
</dbReference>
<dbReference type="PANTHER" id="PTHR24327:SF81">
    <property type="entry name" value="HOMEOTIC PROTEIN DISTAL-LESS-RELATED"/>
    <property type="match status" value="1"/>
</dbReference>
<dbReference type="Pfam" id="PF12413">
    <property type="entry name" value="DLL_N"/>
    <property type="match status" value="1"/>
</dbReference>
<dbReference type="Pfam" id="PF00046">
    <property type="entry name" value="Homeodomain"/>
    <property type="match status" value="1"/>
</dbReference>
<dbReference type="PRINTS" id="PR00031">
    <property type="entry name" value="HTHREPRESSR"/>
</dbReference>
<dbReference type="SMART" id="SM00389">
    <property type="entry name" value="HOX"/>
    <property type="match status" value="1"/>
</dbReference>
<dbReference type="SUPFAM" id="SSF46689">
    <property type="entry name" value="Homeodomain-like"/>
    <property type="match status" value="1"/>
</dbReference>
<dbReference type="PROSITE" id="PS50071">
    <property type="entry name" value="HOMEOBOX_2"/>
    <property type="match status" value="1"/>
</dbReference>
<keyword id="KW-0217">Developmental protein</keyword>
<keyword id="KW-0238">DNA-binding</keyword>
<keyword id="KW-0371">Homeobox</keyword>
<keyword id="KW-0539">Nucleus</keyword>
<feature type="chain" id="PRO_0000049042" description="Homeobox protein DLX-4">
    <location>
        <begin position="1" status="less than"/>
        <end position="131" status="greater than"/>
    </location>
</feature>
<feature type="DNA-binding region" description="Homeobox" evidence="3">
    <location>
        <begin position="82"/>
        <end position="131" status="greater than"/>
    </location>
</feature>
<feature type="region of interest" description="Disordered" evidence="4">
    <location>
        <begin position="48"/>
        <end position="71"/>
    </location>
</feature>
<feature type="non-terminal residue">
    <location>
        <position position="1"/>
    </location>
</feature>
<feature type="non-terminal residue">
    <location>
        <position position="131"/>
    </location>
</feature>
<protein>
    <recommendedName>
        <fullName>Homeobox protein DLX-4</fullName>
    </recommendedName>
</protein>
<organism>
    <name type="scientific">Eleutherodactylus coqui</name>
    <name type="common">Puerto Rican coqui</name>
    <dbReference type="NCBI Taxonomy" id="57060"/>
    <lineage>
        <taxon>Eukaryota</taxon>
        <taxon>Metazoa</taxon>
        <taxon>Chordata</taxon>
        <taxon>Craniata</taxon>
        <taxon>Vertebrata</taxon>
        <taxon>Euteleostomi</taxon>
        <taxon>Amphibia</taxon>
        <taxon>Batrachia</taxon>
        <taxon>Anura</taxon>
        <taxon>Neobatrachia</taxon>
        <taxon>Hyloidea</taxon>
        <taxon>Eleutherodactylidae</taxon>
        <taxon>Eleutherodactylinae</taxon>
        <taxon>Eleutherodactylus</taxon>
        <taxon>Eleutherodactylus</taxon>
    </lineage>
</organism>
<comment type="function">
    <text evidence="1">During development, may be important for neurocranium morphogenesis.</text>
</comment>
<comment type="subcellular location">
    <subcellularLocation>
        <location evidence="2">Nucleus</location>
    </subcellularLocation>
</comment>
<comment type="developmental stage">
    <text>At stage 14, detected in cells of the anterior and anterior-lateral rim of the neural plate. After neural tube closure, detected externally in cells in the dorsal-midline of the closed neural tube. At TS3 expressed in the region corresponding to olfactory placode, at TS5 detected in all branchial arches and at stage TS6 expressed in the putative apical ectodermal ridge of the limb buds.</text>
</comment>
<comment type="similarity">
    <text evidence="5">Belongs to the distal-less homeobox family.</text>
</comment>